<evidence type="ECO:0000250" key="1">
    <source>
        <dbReference type="UniProtKB" id="P38101"/>
    </source>
</evidence>
<evidence type="ECO:0000255" key="2"/>
<evidence type="ECO:0000305" key="3"/>
<name>EAMB_SALTY</name>
<sequence>MTPMLLSAFWTYTLITALTPGPNNILALSAATAHGFRQSIRVLAGMSLGFLVVMLLCAGIAFSLAVIDPAIIHLLSWVGAAYILWLAWKIATSPAADENARPKPVGFWVSFGLQFVNVKIILYGITALSTFVLPQTQALNWVIGVSILLALIGTFGNVCWALAGHLFQRAFRHYGRQLNIILALLLVYCAVRIFY</sequence>
<proteinExistence type="inferred from homology"/>
<protein>
    <recommendedName>
        <fullName evidence="1">Cysteine/O-acetylserine efflux protein</fullName>
    </recommendedName>
</protein>
<gene>
    <name type="primary">eamB</name>
    <name type="ordered locus">STM2645</name>
</gene>
<organism>
    <name type="scientific">Salmonella typhimurium (strain LT2 / SGSC1412 / ATCC 700720)</name>
    <dbReference type="NCBI Taxonomy" id="99287"/>
    <lineage>
        <taxon>Bacteria</taxon>
        <taxon>Pseudomonadati</taxon>
        <taxon>Pseudomonadota</taxon>
        <taxon>Gammaproteobacteria</taxon>
        <taxon>Enterobacterales</taxon>
        <taxon>Enterobacteriaceae</taxon>
        <taxon>Salmonella</taxon>
    </lineage>
</organism>
<reference key="1">
    <citation type="journal article" date="2001" name="Nature">
        <title>Complete genome sequence of Salmonella enterica serovar Typhimurium LT2.</title>
        <authorList>
            <person name="McClelland M."/>
            <person name="Sanderson K.E."/>
            <person name="Spieth J."/>
            <person name="Clifton S.W."/>
            <person name="Latreille P."/>
            <person name="Courtney L."/>
            <person name="Porwollik S."/>
            <person name="Ali J."/>
            <person name="Dante M."/>
            <person name="Du F."/>
            <person name="Hou S."/>
            <person name="Layman D."/>
            <person name="Leonard S."/>
            <person name="Nguyen C."/>
            <person name="Scott K."/>
            <person name="Holmes A."/>
            <person name="Grewal N."/>
            <person name="Mulvaney E."/>
            <person name="Ryan E."/>
            <person name="Sun H."/>
            <person name="Florea L."/>
            <person name="Miller W."/>
            <person name="Stoneking T."/>
            <person name="Nhan M."/>
            <person name="Waterston R."/>
            <person name="Wilson R.K."/>
        </authorList>
    </citation>
    <scope>NUCLEOTIDE SEQUENCE [LARGE SCALE GENOMIC DNA]</scope>
    <source>
        <strain>LT2 / SGSC1412 / ATCC 700720</strain>
    </source>
</reference>
<dbReference type="EMBL" id="AE006468">
    <property type="protein sequence ID" value="AAL21539.1"/>
    <property type="molecule type" value="Genomic_DNA"/>
</dbReference>
<dbReference type="RefSeq" id="WP_000188414.1">
    <property type="nucleotide sequence ID" value="NC_003197.2"/>
</dbReference>
<dbReference type="STRING" id="99287.STM2645"/>
<dbReference type="PaxDb" id="99287-STM2645"/>
<dbReference type="KEGG" id="stm:STM2645"/>
<dbReference type="PATRIC" id="fig|99287.12.peg.2795"/>
<dbReference type="HOGENOM" id="CLU_079569_1_2_6"/>
<dbReference type="OMA" id="NPKAWIM"/>
<dbReference type="PhylomeDB" id="Q8ZMX5"/>
<dbReference type="BioCyc" id="SENT99287:STM2645-MONOMER"/>
<dbReference type="Proteomes" id="UP000001014">
    <property type="component" value="Chromosome"/>
</dbReference>
<dbReference type="GO" id="GO:0005886">
    <property type="term" value="C:plasma membrane"/>
    <property type="evidence" value="ECO:0000318"/>
    <property type="project" value="GO_Central"/>
</dbReference>
<dbReference type="GO" id="GO:0015171">
    <property type="term" value="F:amino acid transmembrane transporter activity"/>
    <property type="evidence" value="ECO:0000318"/>
    <property type="project" value="GO_Central"/>
</dbReference>
<dbReference type="GO" id="GO:0033228">
    <property type="term" value="P:cysteine export across plasma membrane"/>
    <property type="evidence" value="ECO:0000318"/>
    <property type="project" value="GO_Central"/>
</dbReference>
<dbReference type="InterPro" id="IPR001123">
    <property type="entry name" value="LeuE-type"/>
</dbReference>
<dbReference type="NCBIfam" id="NF007653">
    <property type="entry name" value="PRK10323.1"/>
    <property type="match status" value="1"/>
</dbReference>
<dbReference type="PANTHER" id="PTHR30086">
    <property type="entry name" value="ARGININE EXPORTER PROTEIN ARGO"/>
    <property type="match status" value="1"/>
</dbReference>
<dbReference type="PANTHER" id="PTHR30086:SF20">
    <property type="entry name" value="ARGININE EXPORTER PROTEIN ARGO-RELATED"/>
    <property type="match status" value="1"/>
</dbReference>
<dbReference type="Pfam" id="PF01810">
    <property type="entry name" value="LysE"/>
    <property type="match status" value="1"/>
</dbReference>
<keyword id="KW-0029">Amino-acid transport</keyword>
<keyword id="KW-0997">Cell inner membrane</keyword>
<keyword id="KW-1003">Cell membrane</keyword>
<keyword id="KW-0472">Membrane</keyword>
<keyword id="KW-1185">Reference proteome</keyword>
<keyword id="KW-0812">Transmembrane</keyword>
<keyword id="KW-1133">Transmembrane helix</keyword>
<keyword id="KW-0813">Transport</keyword>
<feature type="chain" id="PRO_0000318731" description="Cysteine/O-acetylserine efflux protein">
    <location>
        <begin position="1"/>
        <end position="195"/>
    </location>
</feature>
<feature type="topological domain" description="Periplasmic" evidence="2">
    <location>
        <begin position="1"/>
        <end position="9"/>
    </location>
</feature>
<feature type="transmembrane region" description="Helical" evidence="2">
    <location>
        <begin position="10"/>
        <end position="32"/>
    </location>
</feature>
<feature type="topological domain" description="Cytoplasmic" evidence="2">
    <location>
        <begin position="33"/>
        <end position="46"/>
    </location>
</feature>
<feature type="transmembrane region" description="Helical" evidence="2">
    <location>
        <begin position="47"/>
        <end position="67"/>
    </location>
</feature>
<feature type="topological domain" description="Periplasmic" evidence="2">
    <location>
        <begin position="68"/>
        <end position="69"/>
    </location>
</feature>
<feature type="transmembrane region" description="Helical" evidence="2">
    <location>
        <begin position="70"/>
        <end position="90"/>
    </location>
</feature>
<feature type="topological domain" description="Cytoplasmic" evidence="2">
    <location>
        <begin position="91"/>
        <end position="104"/>
    </location>
</feature>
<feature type="transmembrane region" description="Helical" evidence="2">
    <location>
        <begin position="105"/>
        <end position="125"/>
    </location>
</feature>
<feature type="topological domain" description="Periplasmic" evidence="2">
    <location>
        <begin position="126"/>
        <end position="141"/>
    </location>
</feature>
<feature type="transmembrane region" description="Helical" evidence="2">
    <location>
        <begin position="142"/>
        <end position="162"/>
    </location>
</feature>
<feature type="topological domain" description="Cytoplasmic" evidence="2">
    <location>
        <begin position="163"/>
        <end position="176"/>
    </location>
</feature>
<feature type="transmembrane region" description="Helical" evidence="2">
    <location>
        <begin position="177"/>
        <end position="194"/>
    </location>
</feature>
<feature type="topological domain" description="Periplasmic" evidence="1">
    <location>
        <position position="195"/>
    </location>
</feature>
<accession>Q8ZMX5</accession>
<comment type="function">
    <text evidence="1">Exporter of O-acetylserine (OAS) and cysteine.</text>
</comment>
<comment type="catalytic activity">
    <reaction evidence="1">
        <text>O-acetyl-L-serine(in) = O-acetyl-L-serine(out)</text>
        <dbReference type="Rhea" id="RHEA:29659"/>
        <dbReference type="ChEBI" id="CHEBI:58340"/>
    </reaction>
    <physiologicalReaction direction="left-to-right" evidence="1">
        <dbReference type="Rhea" id="RHEA:29660"/>
    </physiologicalReaction>
</comment>
<comment type="catalytic activity">
    <reaction evidence="1">
        <text>L-cysteine(in) = L-cysteine(out)</text>
        <dbReference type="Rhea" id="RHEA:29655"/>
        <dbReference type="ChEBI" id="CHEBI:35235"/>
    </reaction>
    <physiologicalReaction direction="left-to-right" evidence="1">
        <dbReference type="Rhea" id="RHEA:29656"/>
    </physiologicalReaction>
</comment>
<comment type="subcellular location">
    <subcellularLocation>
        <location evidence="1">Cell inner membrane</location>
        <topology evidence="2">Multi-pass membrane protein</topology>
    </subcellularLocation>
</comment>
<comment type="similarity">
    <text evidence="3">Belongs to the Rht family.</text>
</comment>